<name>DOA1_YEAST</name>
<comment type="function">
    <text evidence="6 7 8 9 10 11 14 15 16 17 18">Ubiquitin-binding protein involved in protein ubiquitination, sorting and degradation (PubMed:18508771, PubMed:19805280, PubMed:20508643, PubMed:2111732, PubMed:27044889, PubMed:8890162). Acts as a ubiquitinated substrate-recruiting adapter for chaperone ATPase CDC48 by binding mono- or polyubiquitin chains (PubMed:15096053, PubMed:16427015, PubMed:16428438, PubMed:27044889). Depending on the context, promotes or prevents proteasomal degradation of ubiquitinated proteins (PubMed:19805280, PubMed:2111732, PubMed:27044889, PubMed:8890162). Involved in the ubiquitin fusion degradation (UFD) pathway by promoting the degradation of ubiquitinated proteins (PubMed:19805280, PubMed:2111732, PubMed:27044889, PubMed:8890162). Involved in the mitochondria-associated degradation pathway (MAD) by promoting the degradation of several ubiquitinated membrane proteins (PubMed:27044889). By competing with UFD2 to bind CDC48, prevents the multi-ubiquitination and subsequent degradation of UFD2-dependent substrates (PubMed:16427015). Required for ribophagy, a process which relocalizes ribosomal particles into the vacuole for degradation in response to starvation (PubMed:20508643). Involved in the ubiquitin-mediated sorting of membrane proteins into multivesicular bodies (MVBs) (PubMed:18508771). In addition, plays an essential role in maintaining cellular ubiquitin levels (PubMed:16427015, PubMed:16428438, PubMed:18508771, PubMed:19805280, PubMed:7615550). May affect indirectly the degradation of ubiquitinylated proteins by regulating cellular ubiquitin levels (PubMed:23525333, PubMed:7615550).</text>
</comment>
<comment type="subunit">
    <text evidence="6 7 8 9 10 11 13 16 18">Forms a complex composed of CDC48, NPL4, UFD1, DOA1, SHP1 and deubiquitinase OTU1; within the complex interacts with CDC48 (PubMed:16427015). Interacts (via PUL domain) with CDC48 (via C-terminus); the interaction is direct (PubMed:16427015, PubMed:16428438, PubMed:19805280, PubMed:20508643, PubMed:27044889, PubMed:8890162). Forms a complex composed of CDC48, DOA1, deubiquitinase UBP3 and probably BRE5; within the complex interacts with CDC48 and UBP3 (PubMed:20508643). May form a complex composed of VPS27, HSE1 and DOA1 (PubMed:18508771). Interacts with HSE1 (via SH3 domain) (PubMed:18508771). Interacts (via WD repeats and PFU domain) with ubiquitin; the interaction is direct (PubMed:15096053, PubMed:16427015, PubMed:16428438, PubMed:21070969). Interacts with ubiquitinated FZO1 but not unmodified FZO1; the interaction recruits FZO1 to CDC48 and promotes FZO1 proteasomal degradation (PubMed:27044889).</text>
</comment>
<comment type="interaction">
    <interactant intactId="EBI-6017">
        <id>P36037</id>
    </interactant>
    <interactant intactId="EBI-4308">
        <id>P25694</id>
        <label>CDC48</label>
    </interactant>
    <organismsDiffer>false</organismsDiffer>
    <experiments>6</experiments>
</comment>
<comment type="interaction">
    <interactant intactId="EBI-6017">
        <id>P36037</id>
    </interactant>
    <interactant intactId="EBI-1382">
        <id>P38753</id>
        <label>HSE1</label>
    </interactant>
    <organismsDiffer>false</organismsDiffer>
    <experiments>3</experiments>
</comment>
<comment type="interaction">
    <interactant intactId="EBI-6017">
        <id>P36037</id>
    </interactant>
    <interactant intactId="EBI-19834">
        <id>Q01477</id>
        <label>UBP3</label>
    </interactant>
    <organismsDiffer>false</organismsDiffer>
    <experiments>4</experiments>
</comment>
<comment type="interaction">
    <interactant intactId="EBI-6017">
        <id>P36037</id>
    </interactant>
    <interactant intactId="EBI-80597">
        <id>Q01853</id>
        <label>Vcp</label>
    </interactant>
    <organismsDiffer>true</organismsDiffer>
    <experiments>2</experiments>
</comment>
<comment type="subcellular location">
    <subcellularLocation>
        <location evidence="4 9 16">Nucleus</location>
    </subcellularLocation>
    <subcellularLocation>
        <location evidence="4 9 16">Cytoplasm</location>
    </subcellularLocation>
    <subcellularLocation>
        <location evidence="16">Mitochondrion outer membrane</location>
        <topology evidence="16">Peripheral membrane protein</topology>
        <orientation evidence="16">Cytoplasmic side</orientation>
    </subcellularLocation>
    <subcellularLocation>
        <location evidence="9">Endosome membrane</location>
        <topology evidence="9">Peripheral membrane protein</topology>
        <orientation evidence="9">Cytoplasmic side</orientation>
    </subcellularLocation>
    <text evidence="9 16">Predominantly localizes to the cytoplasm. Probably localizes to endosomes and mitochondria in a transient manner.</text>
</comment>
<comment type="domain">
    <text evidence="13">The WD repeats mediate interaction with ubiquitin.</text>
</comment>
<comment type="domain">
    <text evidence="7 8 10">The PUL domain is composed of 6 armadillo-like repeats and mediates the interaction with CDC48 C-terminus.</text>
</comment>
<comment type="domain">
    <text evidence="8 9">The PFU domain mediates interaction with ubiquitin.</text>
</comment>
<comment type="disruption phenotype">
    <text evidence="7 8 9 16">Severely reduces cell growth in response to misfolded protein, translation inhibition-induced, heat or mitochondrial oxidative stresses but not in response to ER stress (PubMed:16427015, PubMed:16428438, PubMed:18508771, PubMed:27044889).</text>
</comment>
<comment type="miscellaneous">
    <text evidence="5">Present with 6800 molecules/cell in log phase SD medium.</text>
</comment>
<comment type="similarity">
    <text evidence="21">Belongs to the WD repeat PLAP family.</text>
</comment>
<dbReference type="EMBL" id="U39947">
    <property type="protein sequence ID" value="AAA82258.1"/>
    <property type="molecule type" value="Genomic_DNA"/>
</dbReference>
<dbReference type="EMBL" id="X75951">
    <property type="protein sequence ID" value="CAA53560.1"/>
    <property type="molecule type" value="Genomic_DNA"/>
</dbReference>
<dbReference type="EMBL" id="Z28213">
    <property type="protein sequence ID" value="CAA82058.1"/>
    <property type="molecule type" value="Genomic_DNA"/>
</dbReference>
<dbReference type="EMBL" id="BK006944">
    <property type="protein sequence ID" value="DAA08956.1"/>
    <property type="molecule type" value="Genomic_DNA"/>
</dbReference>
<dbReference type="PIR" id="S38051">
    <property type="entry name" value="S38051"/>
</dbReference>
<dbReference type="RefSeq" id="NP_012709.1">
    <property type="nucleotide sequence ID" value="NM_001179778.1"/>
</dbReference>
<dbReference type="PDB" id="3GAE">
    <property type="method" value="X-ray"/>
    <property type="resolution" value="1.60 A"/>
    <property type="chains" value="A/B=464-715"/>
</dbReference>
<dbReference type="PDB" id="3L3F">
    <property type="method" value="X-ray"/>
    <property type="resolution" value="1.90 A"/>
    <property type="chains" value="X=354-715"/>
</dbReference>
<dbReference type="PDB" id="3ODT">
    <property type="method" value="X-ray"/>
    <property type="resolution" value="1.35 A"/>
    <property type="chains" value="A/B=2-300"/>
</dbReference>
<dbReference type="PDB" id="3PSP">
    <property type="method" value="X-ray"/>
    <property type="resolution" value="2.42 A"/>
    <property type="chains" value="A=325-715"/>
</dbReference>
<dbReference type="PDB" id="3PST">
    <property type="method" value="X-ray"/>
    <property type="resolution" value="2.00 A"/>
    <property type="chains" value="A=325-715"/>
</dbReference>
<dbReference type="PDBsum" id="3GAE"/>
<dbReference type="PDBsum" id="3L3F"/>
<dbReference type="PDBsum" id="3ODT"/>
<dbReference type="PDBsum" id="3PSP"/>
<dbReference type="PDBsum" id="3PST"/>
<dbReference type="SMR" id="P36037"/>
<dbReference type="BioGRID" id="33952">
    <property type="interactions" value="708"/>
</dbReference>
<dbReference type="DIP" id="DIP-6274N"/>
<dbReference type="FunCoup" id="P36037">
    <property type="interactions" value="1644"/>
</dbReference>
<dbReference type="IntAct" id="P36037">
    <property type="interactions" value="11"/>
</dbReference>
<dbReference type="MINT" id="P36037"/>
<dbReference type="STRING" id="4932.YKL213C"/>
<dbReference type="TCDB" id="3.A.16.1.6">
    <property type="family name" value="the endoplasmic reticular retrotranslocon (er-rt) family"/>
</dbReference>
<dbReference type="GlyGen" id="P36037">
    <property type="glycosylation" value="2 sites, 1 O-linked glycan (2 sites)"/>
</dbReference>
<dbReference type="iPTMnet" id="P36037"/>
<dbReference type="PaxDb" id="4932-YKL213C"/>
<dbReference type="PeptideAtlas" id="P36037"/>
<dbReference type="EnsemblFungi" id="YKL213C_mRNA">
    <property type="protein sequence ID" value="YKL213C"/>
    <property type="gene ID" value="YKL213C"/>
</dbReference>
<dbReference type="GeneID" id="853667"/>
<dbReference type="KEGG" id="sce:YKL213C"/>
<dbReference type="AGR" id="SGD:S000001696"/>
<dbReference type="SGD" id="S000001696">
    <property type="gene designation" value="DOA1"/>
</dbReference>
<dbReference type="VEuPathDB" id="FungiDB:YKL213C"/>
<dbReference type="eggNOG" id="KOG0301">
    <property type="taxonomic scope" value="Eukaryota"/>
</dbReference>
<dbReference type="GeneTree" id="ENSGT00550000074944"/>
<dbReference type="HOGENOM" id="CLU_011791_2_0_1"/>
<dbReference type="InParanoid" id="P36037"/>
<dbReference type="OMA" id="STIMVKN"/>
<dbReference type="OrthoDB" id="10265988at2759"/>
<dbReference type="BioCyc" id="YEAST:G3O-31971-MONOMER"/>
<dbReference type="BioGRID-ORCS" id="853667">
    <property type="hits" value="0 hits in 10 CRISPR screens"/>
</dbReference>
<dbReference type="EvolutionaryTrace" id="P36037"/>
<dbReference type="PRO" id="PR:P36037"/>
<dbReference type="Proteomes" id="UP000002311">
    <property type="component" value="Chromosome XI"/>
</dbReference>
<dbReference type="RNAct" id="P36037">
    <property type="molecule type" value="protein"/>
</dbReference>
<dbReference type="GO" id="GO:0005737">
    <property type="term" value="C:cytoplasm"/>
    <property type="evidence" value="ECO:0000314"/>
    <property type="project" value="UniProtKB"/>
</dbReference>
<dbReference type="GO" id="GO:0032473">
    <property type="term" value="C:cytoplasmic side of mitochondrial outer membrane"/>
    <property type="evidence" value="ECO:0000314"/>
    <property type="project" value="UniProtKB"/>
</dbReference>
<dbReference type="GO" id="GO:0010008">
    <property type="term" value="C:endosome membrane"/>
    <property type="evidence" value="ECO:0007669"/>
    <property type="project" value="UniProtKB-SubCell"/>
</dbReference>
<dbReference type="GO" id="GO:0005634">
    <property type="term" value="C:nucleus"/>
    <property type="evidence" value="ECO:0000314"/>
    <property type="project" value="UniProtKB"/>
</dbReference>
<dbReference type="GO" id="GO:0036435">
    <property type="term" value="F:K48-linked polyubiquitin modification-dependent protein binding"/>
    <property type="evidence" value="ECO:0000314"/>
    <property type="project" value="SGD"/>
</dbReference>
<dbReference type="GO" id="GO:0044877">
    <property type="term" value="F:protein-containing complex binding"/>
    <property type="evidence" value="ECO:0000315"/>
    <property type="project" value="UniProtKB"/>
</dbReference>
<dbReference type="GO" id="GO:0043130">
    <property type="term" value="F:ubiquitin binding"/>
    <property type="evidence" value="ECO:0000314"/>
    <property type="project" value="SGD"/>
</dbReference>
<dbReference type="GO" id="GO:0140036">
    <property type="term" value="F:ubiquitin-modified protein reader activity"/>
    <property type="evidence" value="ECO:0000353"/>
    <property type="project" value="UniProtKB"/>
</dbReference>
<dbReference type="GO" id="GO:0006303">
    <property type="term" value="P:double-strand break repair via nonhomologous end joining"/>
    <property type="evidence" value="ECO:0000315"/>
    <property type="project" value="SGD"/>
</dbReference>
<dbReference type="GO" id="GO:0070314">
    <property type="term" value="P:G1 to G0 transition"/>
    <property type="evidence" value="ECO:0000315"/>
    <property type="project" value="SGD"/>
</dbReference>
<dbReference type="GO" id="GO:0072671">
    <property type="term" value="P:mitochondria-associated ubiquitin-dependent protein catabolic process"/>
    <property type="evidence" value="ECO:0000315"/>
    <property type="project" value="UniProtKB"/>
</dbReference>
<dbReference type="GO" id="GO:0043161">
    <property type="term" value="P:proteasome-mediated ubiquitin-dependent protein catabolic process"/>
    <property type="evidence" value="ECO:0000315"/>
    <property type="project" value="SGD"/>
</dbReference>
<dbReference type="GO" id="GO:0034517">
    <property type="term" value="P:ribophagy"/>
    <property type="evidence" value="ECO:0000315"/>
    <property type="project" value="SGD"/>
</dbReference>
<dbReference type="GO" id="GO:0010992">
    <property type="term" value="P:ubiquitin recycling"/>
    <property type="evidence" value="ECO:0000315"/>
    <property type="project" value="SGD"/>
</dbReference>
<dbReference type="CDD" id="cd00200">
    <property type="entry name" value="WD40"/>
    <property type="match status" value="1"/>
</dbReference>
<dbReference type="FunFam" id="2.130.10.10:FF:000175">
    <property type="entry name" value="Phospholipase A-2-activating protein"/>
    <property type="match status" value="1"/>
</dbReference>
<dbReference type="FunFam" id="3.10.20.870:FF:000003">
    <property type="entry name" value="Polyubiquitin binding (Doa1 Ufd3) protein"/>
    <property type="match status" value="1"/>
</dbReference>
<dbReference type="Gene3D" id="1.25.10.10">
    <property type="entry name" value="Leucine-rich Repeat Variant"/>
    <property type="match status" value="1"/>
</dbReference>
<dbReference type="Gene3D" id="3.10.20.870">
    <property type="entry name" value="PFU (PLAA family ubiquitin binding), C-terminal domain"/>
    <property type="match status" value="1"/>
</dbReference>
<dbReference type="Gene3D" id="2.130.10.10">
    <property type="entry name" value="YVTN repeat-like/Quinoprotein amine dehydrogenase"/>
    <property type="match status" value="1"/>
</dbReference>
<dbReference type="InterPro" id="IPR011989">
    <property type="entry name" value="ARM-like"/>
</dbReference>
<dbReference type="InterPro" id="IPR016024">
    <property type="entry name" value="ARM-type_fold"/>
</dbReference>
<dbReference type="InterPro" id="IPR020472">
    <property type="entry name" value="G-protein_beta_WD-40_rep"/>
</dbReference>
<dbReference type="InterPro" id="IPR015155">
    <property type="entry name" value="PFU"/>
</dbReference>
<dbReference type="InterPro" id="IPR038122">
    <property type="entry name" value="PFU_sf"/>
</dbReference>
<dbReference type="InterPro" id="IPR013535">
    <property type="entry name" value="PUL_dom"/>
</dbReference>
<dbReference type="InterPro" id="IPR015943">
    <property type="entry name" value="WD40/YVTN_repeat-like_dom_sf"/>
</dbReference>
<dbReference type="InterPro" id="IPR036322">
    <property type="entry name" value="WD40_repeat_dom_sf"/>
</dbReference>
<dbReference type="InterPro" id="IPR001680">
    <property type="entry name" value="WD40_rpt"/>
</dbReference>
<dbReference type="PANTHER" id="PTHR19849">
    <property type="entry name" value="PHOSPHOLIPASE A-2-ACTIVATING PROTEIN"/>
    <property type="match status" value="1"/>
</dbReference>
<dbReference type="PANTHER" id="PTHR19849:SF0">
    <property type="entry name" value="PHOSPHOLIPASE A-2-ACTIVATING PROTEIN"/>
    <property type="match status" value="1"/>
</dbReference>
<dbReference type="Pfam" id="PF09070">
    <property type="entry name" value="PFU"/>
    <property type="match status" value="1"/>
</dbReference>
<dbReference type="Pfam" id="PF08324">
    <property type="entry name" value="PUL"/>
    <property type="match status" value="1"/>
</dbReference>
<dbReference type="Pfam" id="PF00400">
    <property type="entry name" value="WD40"/>
    <property type="match status" value="6"/>
</dbReference>
<dbReference type="PRINTS" id="PR00320">
    <property type="entry name" value="GPROTEINBRPT"/>
</dbReference>
<dbReference type="SMART" id="SM00320">
    <property type="entry name" value="WD40"/>
    <property type="match status" value="6"/>
</dbReference>
<dbReference type="SUPFAM" id="SSF48371">
    <property type="entry name" value="ARM repeat"/>
    <property type="match status" value="1"/>
</dbReference>
<dbReference type="SUPFAM" id="SSF50978">
    <property type="entry name" value="WD40 repeat-like"/>
    <property type="match status" value="1"/>
</dbReference>
<dbReference type="PROSITE" id="PS51394">
    <property type="entry name" value="PFU"/>
    <property type="match status" value="1"/>
</dbReference>
<dbReference type="PROSITE" id="PS51396">
    <property type="entry name" value="PUL"/>
    <property type="match status" value="1"/>
</dbReference>
<dbReference type="PROSITE" id="PS50082">
    <property type="entry name" value="WD_REPEATS_2"/>
    <property type="match status" value="4"/>
</dbReference>
<dbReference type="PROSITE" id="PS50294">
    <property type="entry name" value="WD_REPEATS_REGION"/>
    <property type="match status" value="1"/>
</dbReference>
<reference key="1">
    <citation type="submission" date="1995-11" db="EMBL/GenBank/DDBJ databases">
        <authorList>
            <person name="Hochstrasser M."/>
            <person name="Gang G."/>
        </authorList>
    </citation>
    <scope>NUCLEOTIDE SEQUENCE [GENOMIC DNA]</scope>
</reference>
<reference key="2">
    <citation type="journal article" date="1994" name="Yeast">
        <title>The complete sequencing of a 24.6 kb segment of yeast chromosome XI identified the known loci URA1, SAC1 and TRP3, and revealed 6 new open reading frames including homologues to the threonine dehydratases, membrane transporters, hydantoinases and the phospholipase A2-activating protein.</title>
        <authorList>
            <person name="Tzermia M."/>
            <person name="Horaitis O."/>
            <person name="Alexandraki D."/>
        </authorList>
    </citation>
    <scope>NUCLEOTIDE SEQUENCE [GENOMIC DNA]</scope>
    <source>
        <strain>ATCC 204508 / S288c</strain>
    </source>
</reference>
<reference key="3">
    <citation type="journal article" date="1994" name="Nature">
        <title>Complete DNA sequence of yeast chromosome XI.</title>
        <authorList>
            <person name="Dujon B."/>
            <person name="Alexandraki D."/>
            <person name="Andre B."/>
            <person name="Ansorge W."/>
            <person name="Baladron V."/>
            <person name="Ballesta J.P.G."/>
            <person name="Banrevi A."/>
            <person name="Bolle P.-A."/>
            <person name="Bolotin-Fukuhara M."/>
            <person name="Bossier P."/>
            <person name="Bou G."/>
            <person name="Boyer J."/>
            <person name="Buitrago M.J."/>
            <person name="Cheret G."/>
            <person name="Colleaux L."/>
            <person name="Daignan-Fornier B."/>
            <person name="del Rey F."/>
            <person name="Dion C."/>
            <person name="Domdey H."/>
            <person name="Duesterhoeft A."/>
            <person name="Duesterhus S."/>
            <person name="Entian K.-D."/>
            <person name="Erfle H."/>
            <person name="Esteban P.F."/>
            <person name="Feldmann H."/>
            <person name="Fernandes L."/>
            <person name="Fobo G.M."/>
            <person name="Fritz C."/>
            <person name="Fukuhara H."/>
            <person name="Gabel C."/>
            <person name="Gaillon L."/>
            <person name="Garcia-Cantalejo J.M."/>
            <person name="Garcia-Ramirez J.J."/>
            <person name="Gent M.E."/>
            <person name="Ghazvini M."/>
            <person name="Goffeau A."/>
            <person name="Gonzalez A."/>
            <person name="Grothues D."/>
            <person name="Guerreiro P."/>
            <person name="Hegemann J.H."/>
            <person name="Hewitt N."/>
            <person name="Hilger F."/>
            <person name="Hollenberg C.P."/>
            <person name="Horaitis O."/>
            <person name="Indge K.J."/>
            <person name="Jacquier A."/>
            <person name="James C.M."/>
            <person name="Jauniaux J.-C."/>
            <person name="Jimenez A."/>
            <person name="Keuchel H."/>
            <person name="Kirchrath L."/>
            <person name="Kleine K."/>
            <person name="Koetter P."/>
            <person name="Legrain P."/>
            <person name="Liebl S."/>
            <person name="Louis E.J."/>
            <person name="Maia e Silva A."/>
            <person name="Marck C."/>
            <person name="Monnier A.-L."/>
            <person name="Moestl D."/>
            <person name="Mueller S."/>
            <person name="Obermaier B."/>
            <person name="Oliver S.G."/>
            <person name="Pallier C."/>
            <person name="Pascolo S."/>
            <person name="Pfeiffer F."/>
            <person name="Philippsen P."/>
            <person name="Planta R.J."/>
            <person name="Pohl F.M."/>
            <person name="Pohl T.M."/>
            <person name="Poehlmann R."/>
            <person name="Portetelle D."/>
            <person name="Purnelle B."/>
            <person name="Puzos V."/>
            <person name="Ramezani Rad M."/>
            <person name="Rasmussen S.W."/>
            <person name="Remacha M.A."/>
            <person name="Revuelta J.L."/>
            <person name="Richard G.-F."/>
            <person name="Rieger M."/>
            <person name="Rodrigues-Pousada C."/>
            <person name="Rose M."/>
            <person name="Rupp T."/>
            <person name="Santos M.A."/>
            <person name="Schwager C."/>
            <person name="Sensen C."/>
            <person name="Skala J."/>
            <person name="Soares H."/>
            <person name="Sor F."/>
            <person name="Stegemann J."/>
            <person name="Tettelin H."/>
            <person name="Thierry A."/>
            <person name="Tzermia M."/>
            <person name="Urrestarazu L.A."/>
            <person name="van Dyck L."/>
            <person name="van Vliet-Reedijk J.C."/>
            <person name="Valens M."/>
            <person name="Vandenbol M."/>
            <person name="Vilela C."/>
            <person name="Vissers S."/>
            <person name="von Wettstein D."/>
            <person name="Voss H."/>
            <person name="Wiemann S."/>
            <person name="Xu G."/>
            <person name="Zimmermann J."/>
            <person name="Haasemann M."/>
            <person name="Becker I."/>
            <person name="Mewes H.-W."/>
        </authorList>
    </citation>
    <scope>NUCLEOTIDE SEQUENCE [LARGE SCALE GENOMIC DNA]</scope>
    <source>
        <strain>ATCC 204508 / S288c</strain>
    </source>
</reference>
<reference key="4">
    <citation type="journal article" date="2014" name="G3 (Bethesda)">
        <title>The reference genome sequence of Saccharomyces cerevisiae: Then and now.</title>
        <authorList>
            <person name="Engel S.R."/>
            <person name="Dietrich F.S."/>
            <person name="Fisk D.G."/>
            <person name="Binkley G."/>
            <person name="Balakrishnan R."/>
            <person name="Costanzo M.C."/>
            <person name="Dwight S.S."/>
            <person name="Hitz B.C."/>
            <person name="Karra K."/>
            <person name="Nash R.S."/>
            <person name="Weng S."/>
            <person name="Wong E.D."/>
            <person name="Lloyd P."/>
            <person name="Skrzypek M.S."/>
            <person name="Miyasato S.R."/>
            <person name="Simison M."/>
            <person name="Cherry J.M."/>
        </authorList>
    </citation>
    <scope>GENOME REANNOTATION</scope>
    <source>
        <strain>ATCC 204508 / S288c</strain>
    </source>
</reference>
<reference key="5">
    <citation type="journal article" date="2004" name="Biochemistry">
        <title>Identification of a novel 29-linked polyubiquitin binding protein, Ufd3, using polyubiquitin chain analogues.</title>
        <authorList>
            <person name="Russell N.S."/>
            <person name="Wilkinson K.D."/>
        </authorList>
    </citation>
    <scope>PROTEIN SEQUENCE OF 126-144; 173-183; 215-227; 316-335; 345-361; 384-420; 534-541; 598-613; 654-685 AND 700-706</scope>
    <scope>FUNCTION</scope>
    <scope>INTERACTION WITH UBIQUITIN</scope>
</reference>
<reference key="6">
    <citation type="journal article" date="1990" name="Cell">
        <title>In vivo degradation of a transcriptional regulator: the yeast alpha 2 repressor.</title>
        <authorList>
            <person name="Hochstrasser M."/>
            <person name="Varshavsky A."/>
        </authorList>
    </citation>
    <scope>FUNCTION</scope>
</reference>
<reference key="7">
    <citation type="journal article" date="1995" name="J. Biol. Chem.">
        <title>A proteolytic pathway that recognizes ubiquitin as a degradation signal.</title>
        <authorList>
            <person name="Johnson E.S."/>
            <person name="Ma P.C.M."/>
            <person name="Ota I.M."/>
            <person name="Varshavsky A."/>
        </authorList>
    </citation>
    <scope>FUNCTION</scope>
</reference>
<reference key="8">
    <citation type="journal article" date="1996" name="EMBO J.">
        <title>Cdc48p interacts with Ufd3p, a WD repeat protein required for ubiquitin-mediated proteolysis in Saccharomyces cerevisiae.</title>
        <authorList>
            <person name="Ghislain M."/>
            <person name="Dohmen R.J."/>
            <person name="Levy F."/>
            <person name="Varshavsky A."/>
        </authorList>
    </citation>
    <scope>FUNCTION</scope>
    <scope>INTERACTION WITH CDC48</scope>
    <scope>MUTAGENESIS OF CYS-237</scope>
</reference>
<reference key="9">
    <citation type="journal article" date="2003" name="Nature">
        <title>Global analysis of protein localization in budding yeast.</title>
        <authorList>
            <person name="Huh W.-K."/>
            <person name="Falvo J.V."/>
            <person name="Gerke L.C."/>
            <person name="Carroll A.S."/>
            <person name="Howson R.W."/>
            <person name="Weissman J.S."/>
            <person name="O'Shea E.K."/>
        </authorList>
    </citation>
    <scope>SUBCELLULAR LOCATION [LARGE SCALE ANALYSIS]</scope>
</reference>
<reference key="10">
    <citation type="journal article" date="2003" name="Nature">
        <title>Global analysis of protein expression in yeast.</title>
        <authorList>
            <person name="Ghaemmaghami S."/>
            <person name="Huh W.-K."/>
            <person name="Bower K."/>
            <person name="Howson R.W."/>
            <person name="Belle A."/>
            <person name="Dephoure N."/>
            <person name="O'Shea E.K."/>
            <person name="Weissman J.S."/>
        </authorList>
    </citation>
    <scope>LEVEL OF PROTEIN EXPRESSION [LARGE SCALE ANALYSIS]</scope>
</reference>
<reference key="11">
    <citation type="journal article" date="2006" name="Mol. Cell">
        <title>Functional division of substrate processing cofactors of the ubiquitin-selective Cdc48 chaperone.</title>
        <authorList>
            <person name="Rumpf S."/>
            <person name="Jentsch S."/>
        </authorList>
    </citation>
    <scope>FUNCTION</scope>
    <scope>IDENTIFICATION IN A COMPLEX WITH NPL4; UFD1; CDC48; OTU1 AND SHP1</scope>
    <scope>INTERACTION WITH OTU1; UBIQUITIN AND CDC48</scope>
    <scope>DOMAIN</scope>
    <scope>DISRUPTION PHENOTYPE</scope>
    <scope>MUTAGENESIS OF 2-GLY--PHE-287; 2-GLY--SER-359; 2-GLY--MET-425; 426-SER--SER-715 AND 495-LYS--SER-715</scope>
</reference>
<reference key="12">
    <citation type="journal article" date="2006" name="Mol. Cell. Biol.">
        <title>Doa1 is a Cdc48 adapter that possesses a novel ubiquitin binding domain.</title>
        <authorList>
            <person name="Mullally J.E."/>
            <person name="Chernova T."/>
            <person name="Wilkinson K.D."/>
        </authorList>
    </citation>
    <scope>FUNCTION</scope>
    <scope>INTERACTION WITH UBIQUITIN AND CDC48</scope>
    <scope>DOMAIN</scope>
    <scope>DISRUPTION PHENOTYPE</scope>
    <scope>MUTAGENESIS OF 2-GLY--HIS-253; 2-GLY--LEU-253; PHE-417; 426-SER--SER-715; PHE-434 AND 451-ALA--SER-715</scope>
</reference>
<reference key="13">
    <citation type="journal article" date="2008" name="J. Biol. Chem.">
        <title>DOA1/UFD3 plays a role in sorting ubiquitinated membrane proteins into multivesicular bodies.</title>
        <authorList>
            <person name="Ren J."/>
            <person name="Pashkova N."/>
            <person name="Winistorfer S."/>
            <person name="Piper R.C."/>
        </authorList>
    </citation>
    <scope>FUNCTION</scope>
    <scope>INTERACTION WITH HSE1</scope>
    <scope>SUBCELLULAR LOCATION</scope>
    <scope>DOMAIN</scope>
    <scope>DISRUPTION PHENOTYPE</scope>
    <scope>MUTAGENESIS OF 434-PHE--ASN-440 AND 434-PHE--SER-443</scope>
</reference>
<reference key="14">
    <citation type="journal article" date="2008" name="Mol. Cell. Proteomics">
        <title>A multidimensional chromatography technology for in-depth phosphoproteome analysis.</title>
        <authorList>
            <person name="Albuquerque C.P."/>
            <person name="Smolka M.B."/>
            <person name="Payne S.H."/>
            <person name="Bafna V."/>
            <person name="Eng J."/>
            <person name="Zhou H."/>
        </authorList>
    </citation>
    <scope>PHOSPHORYLATION [LARGE SCALE ANALYSIS] AT SER-332</scope>
    <scope>IDENTIFICATION BY MASS SPECTROMETRY [LARGE SCALE ANALYSIS]</scope>
</reference>
<reference key="15">
    <citation type="journal article" date="2009" name="Science">
        <title>Global analysis of Cdk1 substrate phosphorylation sites provides insights into evolution.</title>
        <authorList>
            <person name="Holt L.J."/>
            <person name="Tuch B.B."/>
            <person name="Villen J."/>
            <person name="Johnson A.D."/>
            <person name="Gygi S.P."/>
            <person name="Morgan D.O."/>
        </authorList>
    </citation>
    <scope>PHOSPHORYLATION [LARGE SCALE ANALYSIS] AT SER-332</scope>
    <scope>IDENTIFICATION BY MASS SPECTROMETRY [LARGE SCALE ANALYSIS]</scope>
</reference>
<reference key="16">
    <citation type="journal article" date="2010" name="EMBO Rep.">
        <title>Cdc48 and Ufd3, new partners of the ubiquitin protease Ubp3, are required for ribophagy.</title>
        <authorList>
            <person name="Ossareh-Nazari B."/>
            <person name="Bonizec M."/>
            <person name="Cohen M."/>
            <person name="Dokudovskaya S."/>
            <person name="Delalande F."/>
            <person name="Schaeffer C."/>
            <person name="Van Dorsselaer A."/>
            <person name="Dargemont C."/>
        </authorList>
    </citation>
    <scope>FUNCTION</scope>
    <scope>IDENTIFICATION IN A COMPLEX WITH UBP3; BRE5 AND CDC48</scope>
    <scope>INTERACTION WITH UBP3 AND CDC48</scope>
</reference>
<reference key="17">
    <citation type="journal article" date="2012" name="Proc. Natl. Acad. Sci. U.S.A.">
        <title>N-terminal acetylome analyses and functional insights of the N-terminal acetyltransferase NatB.</title>
        <authorList>
            <person name="Van Damme P."/>
            <person name="Lasa M."/>
            <person name="Polevoda B."/>
            <person name="Gazquez C."/>
            <person name="Elosegui-Artola A."/>
            <person name="Kim D.S."/>
            <person name="De Juan-Pardo E."/>
            <person name="Demeyer K."/>
            <person name="Hole K."/>
            <person name="Larrea E."/>
            <person name="Timmerman E."/>
            <person name="Prieto J."/>
            <person name="Arnesen T."/>
            <person name="Sherman F."/>
            <person name="Gevaert K."/>
            <person name="Aldabe R."/>
        </authorList>
    </citation>
    <scope>IDENTIFICATION BY MASS SPECTROMETRY [LARGE SCALE ANALYSIS]</scope>
</reference>
<reference key="18">
    <citation type="journal article" date="2013" name="Genetics">
        <title>A novel role of the N terminus of budding yeast histone H3 variant Cse4 in ubiquitin-mediated proteolysis.</title>
        <authorList>
            <person name="Au W.C."/>
            <person name="Dawson A.R."/>
            <person name="Rawson D.W."/>
            <person name="Taylor S.B."/>
            <person name="Baker R.E."/>
            <person name="Basrai M.A."/>
        </authorList>
    </citation>
    <scope>FUNCTION</scope>
</reference>
<reference key="19">
    <citation type="journal article" date="2016" name="J. Cell Biol.">
        <title>Doa1 targets ubiquitinated substrates for mitochondria-associated degradation.</title>
        <authorList>
            <person name="Wu X."/>
            <person name="Li L."/>
            <person name="Jiang H."/>
        </authorList>
    </citation>
    <scope>FUNCTION</scope>
    <scope>SUBCELLULAR LOCATION</scope>
    <scope>INTERACTION WITH CDC48 AND FZO1</scope>
    <scope>DISRUPTION PHENOTYPE</scope>
    <scope>MUTAGENESIS OF ASP-15; PHE-222; TRP-265; PHE-417; PHE-434; ARG-541 AND ARG-669</scope>
</reference>
<reference key="20">
    <citation type="journal article" date="2009" name="Proc. Natl. Acad. Sci. U.S.A.">
        <title>An Armadillo motif in Ufd3 interacts with Cdc48 and is involved in ubiquitin homeostasis and protein degradation.</title>
        <authorList>
            <person name="Zhao G."/>
            <person name="Li G."/>
            <person name="Schindelin H."/>
            <person name="Lennarz W.J."/>
        </authorList>
    </citation>
    <scope>X-RAY CRYSTALLOGRAPHY (1.6 ANGSTROMS) OF 464-715</scope>
    <scope>FUNCTION</scope>
    <scope>INTERACTION WITH CDC48</scope>
    <scope>DOMAIN</scope>
    <scope>ARM REPEATS</scope>
    <scope>MUTAGENESIS OF ARG-541 AND ARG-669</scope>
</reference>
<reference key="21">
    <citation type="journal article" date="2010" name="Kobe J. Med. Sci.">
        <title>Crystal structure of a PFU-PUL domain pair of Saccharomyces cerevisiae Doa1/Ufd3.</title>
        <authorList>
            <person name="Nishimasu R."/>
            <person name="Komori H."/>
            <person name="Higuchi Y."/>
            <person name="Nishimasu H."/>
            <person name="Hiroaki H."/>
        </authorList>
    </citation>
    <scope>X-RAY CRYSTALLOGRAPHY (1.9 ANGSTROMS) OF 354-715</scope>
    <scope>ARM REPEATS</scope>
</reference>
<reference key="22">
    <citation type="journal article" date="2010" name="Mol. Cell">
        <title>WD40 repeat propellers define a ubiquitin-binding domain that regulates turnover of F box proteins.</title>
        <authorList>
            <person name="Pashkova N."/>
            <person name="Gakhar L."/>
            <person name="Winistorfer S.C."/>
            <person name="Yu L."/>
            <person name="Ramaswamy S."/>
            <person name="Piper R.C."/>
        </authorList>
    </citation>
    <scope>X-RAY CRYSTALLOGRAPHY (1.35 ANGSTROMS) OF 2-300</scope>
    <scope>INTERACTION WITH UBIQUITIN</scope>
    <scope>DOMAIN</scope>
    <scope>MUTAGENESIS OF LEU-5; ASP-15; ALA-158; PHE-222; TRP-265 AND ASP-281</scope>
</reference>
<reference key="23">
    <citation type="submission" date="2010-12" db="PDB data bank">
        <title>Crystal structure of PUL and PFU domain.</title>
        <authorList>
            <person name="Liu Y."/>
            <person name="Sun J."/>
        </authorList>
    </citation>
    <scope>X-RAY CRYSTALLOGRAPHY (2.00 ANGSTROMS) OF 325-715</scope>
</reference>
<accession>P36037</accession>
<accession>D6VWZ0</accession>
<feature type="chain" id="PRO_0000050958" description="Protein DOA1">
    <location>
        <begin position="1"/>
        <end position="715"/>
    </location>
</feature>
<feature type="repeat" description="WD 1" evidence="1">
    <location>
        <begin position="11"/>
        <end position="40"/>
    </location>
</feature>
<feature type="repeat" description="WD 2" evidence="1">
    <location>
        <begin position="53"/>
        <end position="82"/>
    </location>
</feature>
<feature type="repeat" description="WD 3" evidence="1">
    <location>
        <begin position="97"/>
        <end position="125"/>
    </location>
</feature>
<feature type="repeat" description="WD 4" evidence="1">
    <location>
        <begin position="135"/>
        <end position="166"/>
    </location>
</feature>
<feature type="repeat" description="WD 5" evidence="1">
    <location>
        <begin position="177"/>
        <end position="206"/>
    </location>
</feature>
<feature type="repeat" description="WD 6" evidence="1">
    <location>
        <begin position="218"/>
        <end position="247"/>
    </location>
</feature>
<feature type="repeat" description="WD 7" evidence="1">
    <location>
        <begin position="259"/>
        <end position="288"/>
    </location>
</feature>
<feature type="domain" description="PFU" evidence="2">
    <location>
        <begin position="352"/>
        <end position="449"/>
    </location>
</feature>
<feature type="domain" description="PUL" evidence="3">
    <location>
        <begin position="465"/>
        <end position="715"/>
    </location>
</feature>
<feature type="repeat" description="ARM 1" evidence="12 22">
    <location>
        <begin position="478"/>
        <end position="512"/>
    </location>
</feature>
<feature type="repeat" description="ARM 2" evidence="12 22">
    <location>
        <begin position="513"/>
        <end position="543"/>
    </location>
</feature>
<feature type="repeat" description="ARM 3" evidence="12 22">
    <location>
        <begin position="544"/>
        <end position="582"/>
    </location>
</feature>
<feature type="repeat" description="ARM 4" evidence="12 22">
    <location>
        <begin position="583"/>
        <end position="635"/>
    </location>
</feature>
<feature type="repeat" description="ARM 5" evidence="12 22">
    <location>
        <begin position="636"/>
        <end position="680"/>
    </location>
</feature>
<feature type="repeat" description="ARM 6" evidence="12 22">
    <location>
        <begin position="681"/>
        <end position="715"/>
    </location>
</feature>
<feature type="region of interest" description="Interaction with HSE1" evidence="9">
    <location>
        <begin position="434"/>
        <end position="440"/>
    </location>
</feature>
<feature type="modified residue" description="Phosphoserine" evidence="24 25">
    <location>
        <position position="332"/>
    </location>
</feature>
<feature type="mutagenesis site" description="No binding to ubiquitin but does not affect the interaction with CDC48." evidence="7">
    <location>
        <begin position="2"/>
        <end position="425"/>
    </location>
</feature>
<feature type="mutagenesis site" description="No binding to ubiquitin." evidence="7">
    <location>
        <begin position="2"/>
        <end position="359"/>
    </location>
</feature>
<feature type="mutagenesis site" description="No binding to ubiquitin." evidence="8">
    <location>
        <begin position="2"/>
        <end position="353"/>
    </location>
</feature>
<feature type="mutagenesis site" description="Does not affect binding to ubiquitin." evidence="8">
    <location>
        <begin position="2"/>
        <end position="330"/>
    </location>
</feature>
<feature type="mutagenesis site" description="No binding to ubiquitin." evidence="7">
    <location>
        <begin position="2"/>
        <end position="287"/>
    </location>
</feature>
<feature type="mutagenesis site" description="No binding to ubiquitin." evidence="13">
    <original>L</original>
    <variation>S</variation>
    <location>
        <position position="5"/>
    </location>
</feature>
<feature type="mutagenesis site" description="No binding to ubiquitin. Reduces cell growth at high temperatures (37 degrees Celsius). Inhibits cell growth at high temperatures and prevents the degradation of mitochondrial proteins FZO1, MDM34 and MSP1 without affecting the interaction with CDC48 and UFD1; when associated with A-222 and A-265." evidence="13 16">
    <original>D</original>
    <variation>S</variation>
    <location>
        <position position="15"/>
    </location>
</feature>
<feature type="mutagenesis site" description="No binding to ubiquitin." evidence="13">
    <original>A</original>
    <variation>E</variation>
    <location>
        <position position="158"/>
    </location>
</feature>
<feature type="mutagenesis site" description="No binding to ubiquitin. Inhibits cell growth at high temperatures and prevents the degradation of mitochondrial proteins FZO1, MDM34 and MSP1 without affecting the interaction with CDC48 and UFD1; when associated with S-15 and A-265." evidence="13 16">
    <original>F</original>
    <variation>A</variation>
    <location>
        <position position="222"/>
    </location>
</feature>
<feature type="mutagenesis site" description="In ufd3-2; severe reduction in the degradation of short-lived ubiquitin-fusion proteins. No defect in the interaction with CDC48." evidence="18">
    <original>C</original>
    <variation>Y</variation>
    <location>
        <position position="237"/>
    </location>
</feature>
<feature type="mutagenesis site" description="No binding to ubiquitin. Inhibits cell growth at high temperatures and prevents the degradation of mitochondrial proteins FZO1, MDM34 and MSP1 without affecting the interaction with CDC48 and UFD1; when associated with S-15 and A-222." evidence="13 16">
    <original>W</original>
    <variation>A</variation>
    <location>
        <position position="265"/>
    </location>
</feature>
<feature type="mutagenesis site" description="No binding to ubiquitin." evidence="13">
    <original>D</original>
    <variation>S</variation>
    <location>
        <position position="281"/>
    </location>
</feature>
<feature type="mutagenesis site" description="No binding to ubiquitin." evidence="7">
    <location>
        <begin position="289"/>
        <end position="715"/>
    </location>
</feature>
<feature type="mutagenesis site" description="Prevents binding to mono-ubiquitin, reduces levels of free ubiquitin, prevents the degradation of mitochondrial proteins FZO1, MDM34 and MSP1 and is partially sensitive to misfolded protein or translation inhibition-induced stresses; when associated with D-434." evidence="8 16">
    <original>F</original>
    <variation>D</variation>
    <location>
        <position position="417"/>
    </location>
</feature>
<feature type="mutagenesis site" description="No binding to ubiquitin and no interaction with CDC48." evidence="7 8">
    <location>
        <begin position="426"/>
        <end position="715"/>
    </location>
</feature>
<feature type="mutagenesis site" description="Loss of interaction with HSE1 and ubiquitin without affecting general ubquitination levels. Prevents protease CSP1 sorting into the vacuole." evidence="9">
    <location>
        <begin position="434"/>
        <end position="443"/>
    </location>
</feature>
<feature type="mutagenesis site" description="Loss of interaction with HSE1 without affecting binding to ubiquitin or general ubquitination levels. Prevents protease CSP1 sorting into the vacuole." evidence="9">
    <original>FILKNTN</original>
    <variation>AAAKAAA</variation>
    <location>
        <begin position="434"/>
        <end position="440"/>
    </location>
</feature>
<feature type="mutagenesis site" description="Prevents binding to mono-ubiquitin, reduces levels of free ubiquitin, prevents the degradation of mitochondrial proteins FZO1, MDM34 and MSP1 and is partially sensitive to misfolded protein or translation inhibition-induced stresses; when associated with D-417." evidence="8 16">
    <original>F</original>
    <variation>D</variation>
    <location>
        <position position="434"/>
    </location>
</feature>
<feature type="mutagenesis site" description="Does not affect binding to ubiquitin." evidence="8">
    <location>
        <begin position="451"/>
        <end position="715"/>
    </location>
</feature>
<feature type="mutagenesis site" description="Loss of interaction with CDC48 without affecting binding to ubiquitin." evidence="7">
    <location>
        <begin position="495"/>
        <end position="715"/>
    </location>
</feature>
<feature type="mutagenesis site" description="Depletion of cellular ubiquitin pools and reduced activity of the ubiquitin fusion degradation pathway. Prevents the interaction with CDC48 and UFD1 and thus the degradation of mitochondrial proteins FZO1, MDM34 and MSP1; when associated with A-669." evidence="10 16">
    <original>R</original>
    <variation>A</variation>
    <location>
        <position position="541"/>
    </location>
</feature>
<feature type="mutagenesis site" description="Depletion of cellular ubiquitin pools and reduced activity of the ubiquitin fusion degradation pathway. Prevents the interaction with CDC48 and UFD1 and thus the degradation of mitochondrial proteins FZO1, MDM34 and MSP1; when associated with A-541." evidence="10 16">
    <original>R</original>
    <variation>A</variation>
    <location>
        <position position="669"/>
    </location>
</feature>
<feature type="sequence conflict" description="In Ref. 5; AA sequence." evidence="21" ref="5">
    <original>D</original>
    <variation>DI</variation>
    <location>
        <position position="180"/>
    </location>
</feature>
<feature type="strand" evidence="28">
    <location>
        <begin position="4"/>
        <end position="9"/>
    </location>
</feature>
<feature type="strand" evidence="28">
    <location>
        <begin position="16"/>
        <end position="23"/>
    </location>
</feature>
<feature type="strand" evidence="28">
    <location>
        <begin position="26"/>
        <end position="31"/>
    </location>
</feature>
<feature type="strand" evidence="28">
    <location>
        <begin position="34"/>
        <end position="52"/>
    </location>
</feature>
<feature type="strand" evidence="28">
    <location>
        <begin position="57"/>
        <end position="63"/>
    </location>
</feature>
<feature type="turn" evidence="28">
    <location>
        <begin position="64"/>
        <end position="67"/>
    </location>
</feature>
<feature type="strand" evidence="28">
    <location>
        <begin position="68"/>
        <end position="73"/>
    </location>
</feature>
<feature type="strand" evidence="28">
    <location>
        <begin position="78"/>
        <end position="82"/>
    </location>
</feature>
<feature type="strand" evidence="28">
    <location>
        <begin position="102"/>
        <end position="108"/>
    </location>
</feature>
<feature type="strand" evidence="28">
    <location>
        <begin position="111"/>
        <end position="116"/>
    </location>
</feature>
<feature type="strand" evidence="28">
    <location>
        <begin position="119"/>
        <end position="125"/>
    </location>
</feature>
<feature type="strand" evidence="28">
    <location>
        <begin position="128"/>
        <end position="134"/>
    </location>
</feature>
<feature type="strand" evidence="28">
    <location>
        <begin position="140"/>
        <end position="147"/>
    </location>
</feature>
<feature type="turn" evidence="28">
    <location>
        <begin position="148"/>
        <end position="151"/>
    </location>
</feature>
<feature type="strand" evidence="28">
    <location>
        <begin position="152"/>
        <end position="157"/>
    </location>
</feature>
<feature type="strand" evidence="28">
    <location>
        <begin position="162"/>
        <end position="166"/>
    </location>
</feature>
<feature type="strand" evidence="28">
    <location>
        <begin position="169"/>
        <end position="174"/>
    </location>
</feature>
<feature type="strand" evidence="28">
    <location>
        <begin position="182"/>
        <end position="189"/>
    </location>
</feature>
<feature type="strand" evidence="28">
    <location>
        <begin position="192"/>
        <end position="197"/>
    </location>
</feature>
<feature type="strand" evidence="28">
    <location>
        <begin position="200"/>
        <end position="206"/>
    </location>
</feature>
<feature type="turn" evidence="28">
    <location>
        <begin position="207"/>
        <end position="209"/>
    </location>
</feature>
<feature type="strand" evidence="28">
    <location>
        <begin position="212"/>
        <end position="217"/>
    </location>
</feature>
<feature type="strand" evidence="28">
    <location>
        <begin position="223"/>
        <end position="228"/>
    </location>
</feature>
<feature type="strand" evidence="28">
    <location>
        <begin position="234"/>
        <end position="238"/>
    </location>
</feature>
<feature type="strand" evidence="28">
    <location>
        <begin position="241"/>
        <end position="246"/>
    </location>
</feature>
<feature type="turn" evidence="28">
    <location>
        <begin position="248"/>
        <end position="250"/>
    </location>
</feature>
<feature type="strand" evidence="28">
    <location>
        <begin position="253"/>
        <end position="258"/>
    </location>
</feature>
<feature type="strand" evidence="28">
    <location>
        <begin position="260"/>
        <end position="262"/>
    </location>
</feature>
<feature type="strand" evidence="28">
    <location>
        <begin position="264"/>
        <end position="269"/>
    </location>
</feature>
<feature type="strand" evidence="28">
    <location>
        <begin position="275"/>
        <end position="279"/>
    </location>
</feature>
<feature type="strand" evidence="28">
    <location>
        <begin position="284"/>
        <end position="289"/>
    </location>
</feature>
<feature type="helix" evidence="28">
    <location>
        <begin position="291"/>
        <end position="293"/>
    </location>
</feature>
<feature type="strand" evidence="27">
    <location>
        <begin position="378"/>
        <end position="380"/>
    </location>
</feature>
<feature type="strand" evidence="27">
    <location>
        <begin position="383"/>
        <end position="391"/>
    </location>
</feature>
<feature type="strand" evidence="27">
    <location>
        <begin position="400"/>
        <end position="404"/>
    </location>
</feature>
<feature type="helix" evidence="27">
    <location>
        <begin position="410"/>
        <end position="420"/>
    </location>
</feature>
<feature type="helix" evidence="27">
    <location>
        <begin position="425"/>
        <end position="427"/>
    </location>
</feature>
<feature type="helix" evidence="27">
    <location>
        <begin position="428"/>
        <end position="438"/>
    </location>
</feature>
<feature type="helix" evidence="26">
    <location>
        <begin position="480"/>
        <end position="494"/>
    </location>
</feature>
<feature type="helix" evidence="26">
    <location>
        <begin position="499"/>
        <end position="509"/>
    </location>
</feature>
<feature type="helix" evidence="26">
    <location>
        <begin position="512"/>
        <end position="529"/>
    </location>
</feature>
<feature type="helix" evidence="26">
    <location>
        <begin position="534"/>
        <end position="543"/>
    </location>
</feature>
<feature type="helix" evidence="26">
    <location>
        <begin position="544"/>
        <end position="546"/>
    </location>
</feature>
<feature type="helix" evidence="26">
    <location>
        <begin position="550"/>
        <end position="553"/>
    </location>
</feature>
<feature type="helix" evidence="26">
    <location>
        <begin position="554"/>
        <end position="560"/>
    </location>
</feature>
<feature type="helix" evidence="26">
    <location>
        <begin position="566"/>
        <end position="579"/>
    </location>
</feature>
<feature type="turn" evidence="26">
    <location>
        <begin position="583"/>
        <end position="585"/>
    </location>
</feature>
<feature type="helix" evidence="26">
    <location>
        <begin position="586"/>
        <end position="590"/>
    </location>
</feature>
<feature type="helix" evidence="26">
    <location>
        <begin position="593"/>
        <end position="596"/>
    </location>
</feature>
<feature type="helix" evidence="26">
    <location>
        <begin position="599"/>
        <end position="602"/>
    </location>
</feature>
<feature type="strand" evidence="29">
    <location>
        <begin position="608"/>
        <end position="610"/>
    </location>
</feature>
<feature type="helix" evidence="26">
    <location>
        <begin position="612"/>
        <end position="634"/>
    </location>
</feature>
<feature type="helix" evidence="26">
    <location>
        <begin position="642"/>
        <end position="651"/>
    </location>
</feature>
<feature type="turn" evidence="26">
    <location>
        <begin position="652"/>
        <end position="656"/>
    </location>
</feature>
<feature type="helix" evidence="26">
    <location>
        <begin position="658"/>
        <end position="662"/>
    </location>
</feature>
<feature type="helix" evidence="26">
    <location>
        <begin position="664"/>
        <end position="680"/>
    </location>
</feature>
<feature type="helix" evidence="26">
    <location>
        <begin position="682"/>
        <end position="685"/>
    </location>
</feature>
<feature type="turn" evidence="26">
    <location>
        <begin position="688"/>
        <end position="690"/>
    </location>
</feature>
<feature type="helix" evidence="26">
    <location>
        <begin position="692"/>
        <end position="701"/>
    </location>
</feature>
<feature type="helix" evidence="26">
    <location>
        <begin position="705"/>
        <end position="714"/>
    </location>
</feature>
<organism>
    <name type="scientific">Saccharomyces cerevisiae (strain ATCC 204508 / S288c)</name>
    <name type="common">Baker's yeast</name>
    <dbReference type="NCBI Taxonomy" id="559292"/>
    <lineage>
        <taxon>Eukaryota</taxon>
        <taxon>Fungi</taxon>
        <taxon>Dikarya</taxon>
        <taxon>Ascomycota</taxon>
        <taxon>Saccharomycotina</taxon>
        <taxon>Saccharomycetes</taxon>
        <taxon>Saccharomycetales</taxon>
        <taxon>Saccharomycetaceae</taxon>
        <taxon>Saccharomyces</taxon>
    </lineage>
</organism>
<proteinExistence type="evidence at protein level"/>
<gene>
    <name evidence="19 23" type="primary">DOA1</name>
    <name evidence="20 23" type="synonym">UFD3</name>
    <name evidence="23" type="synonym">ZZZ4</name>
    <name evidence="23" type="ordered locus">YKL213C</name>
</gene>
<keyword id="KW-0002">3D-structure</keyword>
<keyword id="KW-0963">Cytoplasm</keyword>
<keyword id="KW-0903">Direct protein sequencing</keyword>
<keyword id="KW-0967">Endosome</keyword>
<keyword id="KW-0472">Membrane</keyword>
<keyword id="KW-0496">Mitochondrion</keyword>
<keyword id="KW-1000">Mitochondrion outer membrane</keyword>
<keyword id="KW-0539">Nucleus</keyword>
<keyword id="KW-0597">Phosphoprotein</keyword>
<keyword id="KW-1185">Reference proteome</keyword>
<keyword id="KW-0677">Repeat</keyword>
<keyword id="KW-0833">Ubl conjugation pathway</keyword>
<keyword id="KW-0853">WD repeat</keyword>
<evidence type="ECO:0000255" key="1"/>
<evidence type="ECO:0000255" key="2">
    <source>
        <dbReference type="PROSITE-ProRule" id="PRU00727"/>
    </source>
</evidence>
<evidence type="ECO:0000255" key="3">
    <source>
        <dbReference type="PROSITE-ProRule" id="PRU00729"/>
    </source>
</evidence>
<evidence type="ECO:0000269" key="4">
    <source>
    </source>
</evidence>
<evidence type="ECO:0000269" key="5">
    <source>
    </source>
</evidence>
<evidence type="ECO:0000269" key="6">
    <source>
    </source>
</evidence>
<evidence type="ECO:0000269" key="7">
    <source>
    </source>
</evidence>
<evidence type="ECO:0000269" key="8">
    <source>
    </source>
</evidence>
<evidence type="ECO:0000269" key="9">
    <source>
    </source>
</evidence>
<evidence type="ECO:0000269" key="10">
    <source>
    </source>
</evidence>
<evidence type="ECO:0000269" key="11">
    <source>
    </source>
</evidence>
<evidence type="ECO:0000269" key="12">
    <source>
    </source>
</evidence>
<evidence type="ECO:0000269" key="13">
    <source>
    </source>
</evidence>
<evidence type="ECO:0000269" key="14">
    <source>
    </source>
</evidence>
<evidence type="ECO:0000269" key="15">
    <source>
    </source>
</evidence>
<evidence type="ECO:0000269" key="16">
    <source>
    </source>
</evidence>
<evidence type="ECO:0000269" key="17">
    <source>
    </source>
</evidence>
<evidence type="ECO:0000269" key="18">
    <source>
    </source>
</evidence>
<evidence type="ECO:0000303" key="19">
    <source>
    </source>
</evidence>
<evidence type="ECO:0000303" key="20">
    <source>
    </source>
</evidence>
<evidence type="ECO:0000305" key="21"/>
<evidence type="ECO:0000305" key="22">
    <source>
    </source>
</evidence>
<evidence type="ECO:0000312" key="23">
    <source>
        <dbReference type="SGD" id="S000001696"/>
    </source>
</evidence>
<evidence type="ECO:0007744" key="24">
    <source>
    </source>
</evidence>
<evidence type="ECO:0007744" key="25">
    <source>
    </source>
</evidence>
<evidence type="ECO:0007829" key="26">
    <source>
        <dbReference type="PDB" id="3GAE"/>
    </source>
</evidence>
<evidence type="ECO:0007829" key="27">
    <source>
        <dbReference type="PDB" id="3L3F"/>
    </source>
</evidence>
<evidence type="ECO:0007829" key="28">
    <source>
        <dbReference type="PDB" id="3ODT"/>
    </source>
</evidence>
<evidence type="ECO:0007829" key="29">
    <source>
        <dbReference type="PDB" id="3PSP"/>
    </source>
</evidence>
<sequence length="715" mass="79506">MGYQLSATLKGHDQDVRDVVAVDDSKVASVSRDGTVRLWSKDDQWLGTVVYTGQGFLNSVCYDSEKELLLFGGKDTMINGVPLFATSGEDPLYTLIGHQGNVCSLSFQDGVVISGSWDKTAKVWKEGSLVYNLQAHNASVWDAKVVSFSENKFLTASADKTIKLWQNDKVIKTFSGIHNDVVRHLAVVDDGHFISCSNDGLIKLVDMHTGDVLRTYEGHESFVYCIKLLPNGDIVSCGEDRTVRIWSKENGSLKQVITLPAISIWSVDCMSNGDIIVGSSDNLVRIFSQEKSRWASEDEINELSTQVEKSTISSKTIEFDESKLSPYEILQSPGRKEGQIVVVKSPQGTIEAHQFSNSSWKKVGDVVGAGATGNDKKIEFEGKTYDYVFDVDIEDGKPPLKLPINVSDNPYTAADNFLARYELPMSYRDQVVQFILKNTNGISLDQPNDNASSSAVSPSKTSVMKVLPVKQYLIMENYNPDTIFNGIVKINSNEKTFDDEILAQIGGALHDIDESWELLLSFANTIRSNWEIKTPAYDIVRLIVKKLPYSSDIKDYIEEGLGNKNITLTMLTVRILVNCFNNENWGVKLLESNQVYKSIFETIDTEFSQASAKQSQNLAIAVSTLIFNYSALVTKGNSDLELLPIVADAINTKYGPLEEYQECEEAAYRLTVAYGNLATVEPTLRQFANSVTWLANIKRSYGNVPRFKDIFDDLS</sequence>
<protein>
    <recommendedName>
        <fullName evidence="19">Protein DOA1</fullName>
    </recommendedName>
    <alternativeName>
        <fullName evidence="19">Degradation of alpha protein 1</fullName>
    </alternativeName>
    <alternativeName>
        <fullName evidence="20">Ubiquitin fusion degradation protein 3</fullName>
    </alternativeName>
</protein>